<accession>Q8VA42</accession>
<keyword id="KW-0378">Hydrolase</keyword>
<keyword id="KW-0547">Nucleotide-binding</keyword>
<keyword id="KW-0548">Nucleotidyltransferase</keyword>
<keyword id="KW-0696">RNA-directed RNA polymerase</keyword>
<keyword id="KW-0808">Transferase</keyword>
<keyword id="KW-0693">Viral RNA replication</keyword>
<keyword id="KW-0946">Virion</keyword>
<evidence type="ECO:0000255" key="1">
    <source>
        <dbReference type="PROSITE-ProRule" id="PRU00539"/>
    </source>
</evidence>
<evidence type="ECO:0000305" key="2"/>
<dbReference type="EC" id="2.7.7.48"/>
<dbReference type="EMBL" id="AF418295">
    <property type="protein sequence ID" value="AAL31497.1"/>
    <property type="molecule type" value="Genomic_RNA"/>
</dbReference>
<dbReference type="SMR" id="Q8VA42"/>
<dbReference type="KEGG" id="vg:3773156"/>
<dbReference type="Proteomes" id="UP000101606">
    <property type="component" value="Genome"/>
</dbReference>
<dbReference type="GO" id="GO:0019013">
    <property type="term" value="C:viral nucleocapsid"/>
    <property type="evidence" value="ECO:0007669"/>
    <property type="project" value="InterPro"/>
</dbReference>
<dbReference type="GO" id="GO:0016787">
    <property type="term" value="F:hydrolase activity"/>
    <property type="evidence" value="ECO:0007669"/>
    <property type="project" value="UniProtKB-KW"/>
</dbReference>
<dbReference type="GO" id="GO:0000166">
    <property type="term" value="F:nucleotide binding"/>
    <property type="evidence" value="ECO:0007669"/>
    <property type="project" value="UniProtKB-KW"/>
</dbReference>
<dbReference type="GO" id="GO:0003723">
    <property type="term" value="F:RNA binding"/>
    <property type="evidence" value="ECO:0007669"/>
    <property type="project" value="InterPro"/>
</dbReference>
<dbReference type="GO" id="GO:0003968">
    <property type="term" value="F:RNA-directed RNA polymerase activity"/>
    <property type="evidence" value="ECO:0007669"/>
    <property type="project" value="UniProtKB-KW"/>
</dbReference>
<dbReference type="GO" id="GO:0019079">
    <property type="term" value="P:viral genome replication"/>
    <property type="evidence" value="ECO:0007669"/>
    <property type="project" value="InterPro"/>
</dbReference>
<dbReference type="Gene3D" id="3.90.1850.10">
    <property type="entry name" value="RNA-directed RNA polymerase lambda-3"/>
    <property type="match status" value="1"/>
</dbReference>
<dbReference type="InterPro" id="IPR043502">
    <property type="entry name" value="DNA/RNA_pol_sf"/>
</dbReference>
<dbReference type="InterPro" id="IPR012915">
    <property type="entry name" value="RdRP_5"/>
</dbReference>
<dbReference type="InterPro" id="IPR007097">
    <property type="entry name" value="RNA-dir_pol_reovirus"/>
</dbReference>
<dbReference type="Pfam" id="PF07925">
    <property type="entry name" value="RdRP_5"/>
    <property type="match status" value="1"/>
</dbReference>
<dbReference type="SUPFAM" id="SSF56672">
    <property type="entry name" value="DNA/RNA polymerases"/>
    <property type="match status" value="1"/>
</dbReference>
<dbReference type="PROSITE" id="PS50523">
    <property type="entry name" value="RDRP_DSRNA_REO"/>
    <property type="match status" value="1"/>
</dbReference>
<feature type="chain" id="PRO_0000404171" description="RNA-directed RNA polymerase VP2">
    <location>
        <begin position="1"/>
        <end position="1240"/>
    </location>
</feature>
<feature type="domain" description="RdRp catalytic" evidence="1">
    <location>
        <begin position="516"/>
        <end position="764"/>
    </location>
</feature>
<proteinExistence type="inferred from homology"/>
<organismHost>
    <name type="scientific">Oncorhynchus keta</name>
    <name type="common">Chum salmon</name>
    <name type="synonym">Salmo keta</name>
    <dbReference type="NCBI Taxonomy" id="8018"/>
</organismHost>
<gene>
    <name type="primary">S2</name>
</gene>
<comment type="function">
    <text evidence="1">RNA-directed RNA polymerase that is involved in transcription and genome replication. Following infection, it catalyzes the synthesis of fully conservative plus strands. After core assembly, which consists in recruitment of one capped plus-strand for each genomic segments and polymerase complexes, the polymerase switches mode and catalyzes the synthesis of complementary minus-strands (By similarity).</text>
</comment>
<comment type="catalytic activity">
    <reaction evidence="1">
        <text>RNA(n) + a ribonucleoside 5'-triphosphate = RNA(n+1) + diphosphate</text>
        <dbReference type="Rhea" id="RHEA:21248"/>
        <dbReference type="Rhea" id="RHEA-COMP:14527"/>
        <dbReference type="Rhea" id="RHEA-COMP:17342"/>
        <dbReference type="ChEBI" id="CHEBI:33019"/>
        <dbReference type="ChEBI" id="CHEBI:61557"/>
        <dbReference type="ChEBI" id="CHEBI:140395"/>
        <dbReference type="EC" id="2.7.7.48"/>
    </reaction>
</comment>
<comment type="subcellular location">
    <subcellularLocation>
        <location evidence="2">Virion</location>
    </subcellularLocation>
</comment>
<comment type="similarity">
    <text evidence="2">Belongs to the reoviridae RNA-directed RNA polymerase family.</text>
</comment>
<organism>
    <name type="scientific">Aquareovirus A (isolate Chum salmon/Japan/CSRV/1981)</name>
    <name type="common">AQRV-A</name>
    <dbReference type="NCBI Taxonomy" id="928295"/>
    <lineage>
        <taxon>Viruses</taxon>
        <taxon>Riboviria</taxon>
        <taxon>Orthornavirae</taxon>
        <taxon>Duplornaviricota</taxon>
        <taxon>Resentoviricetes</taxon>
        <taxon>Reovirales</taxon>
        <taxon>Spinareoviridae</taxon>
        <taxon>Aquareovirus</taxon>
        <taxon>Aquareovirus salmonis</taxon>
    </lineage>
</organism>
<protein>
    <recommendedName>
        <fullName>RNA-directed RNA polymerase VP2</fullName>
        <ecNumber>2.7.7.48</ecNumber>
    </recommendedName>
</protein>
<name>RDRP_AQRVA</name>
<reference key="1">
    <citation type="journal article" date="1987" name="J. Gen. Virol.">
        <title>Morphological and biochemical properties of four members of a novel group of reoviruses isolated from aquatic animals.</title>
        <authorList>
            <person name="Winton J.R."/>
            <person name="Lannan C.N."/>
            <person name="Fryer J.L."/>
            <person name="Hedrick R.P."/>
            <person name="Meyers T.R."/>
            <person name="Plumb J.A."/>
            <person name="Yamamoto T."/>
        </authorList>
    </citation>
    <scope>NUCLEOTIDE SEQUENCE [GENOMIC RNA]</scope>
</reference>
<reference key="2">
    <citation type="submission" date="2001-09" db="EMBL/GenBank/DDBJ databases">
        <title>Complete genome sequence of the chum salmon virus.</title>
        <authorList>
            <person name="Rao S."/>
            <person name="Carner G.R."/>
            <person name="Chen W."/>
            <person name="Winton J.R."/>
        </authorList>
    </citation>
    <scope>NUCLEOTIDE SEQUENCE [GENOMIC RNA]</scope>
</reference>
<sequence length="1240" mass="137575">MPGTYAPVPNVYHLLDHLTFRSSVVIPNSNFVGRIWSDYWALQDNIVIRVSPEGAKDADYCHNSNISPILSPLKTITEYGTLHPTIDKDASERGYPSARMASSFFKLASCQARQVKIDPTRFLEFLLVTASSPRVPSGVDSDQPNPWLPETSPALQAIWQIMQRYKLNGNYYAPALVVNTGAVWWIPPPGRTNCVTVQFLITDLINLAVNAFATRLAPELEMCAVRVYLAAASTPNYAHALLDLKSIFPNLSLHSMYREGEFGGKCPRIEWTEPRSSYRFKWIGVTQLYEGLRPLTPSRDSKALLKMRDSGLEDVAKVIITMRRDHPRHTSDSVRFVRGVLSLISGMYLVRPPTMSVLREYSQTPQIEEPIPPDWWTGAVGNLSYFNDKAKGPLAHLYSVWLEAARQVVMDPSTHDPLTQAIYKTQFVTPRGGSSAALKQALVESKVELPDFSGTGVKRSSKIYQTAQLAHFSFQTLIPTIMGQVTLGIRNQVQRRARSIMPMSNPQQTVSVPHTLVANYINKHMNRSTTSGSAVQDKVIPLLLYASTPPRTVINVDIKACDASITYAAFLAPICGAMHQGFDLGDPSLPFMNVPSSTQYDRRNPAAPYNRPVSGLQTMTQHLARLYQAGFSYKVDDPFSSGNSFVFPTTTFPSGSTATSTEHTANNGAMADFFLREYVPQHAKSSTLKFIVKDMNIQNNYVCQGDDGMLIIPDLGTKRISPEDLAELMELLEKYGRGFGWVYDIDSSDSAEYLKLYALFGARIPNISRHPPVGKEYASPETGEIWPSLVNIAMGSFYNGVTDCLEWRDWLKFSWAFACFASRGSFHPKTGPRVDAQYPVWSFIYMGLPPILLPGQTPFLTSVYMPAGDQGIFAILHQWRDYLTARATSDYPPLKRRHPVWHLADVPSLLSDLGVYRGYWAAQVSRRPEPSPDDADPASVEAMSAALSTYLLKDPVLRDRVVRGTNAWRRLTDTHPGRLPSRVPSLLDVPTRWIKAGRDADKPRPSAVAMMMKDIQRAASSSRKDFSRLLELYLHVHVHLGPPVPLAVDPEVPHVAGADILNDDHWYKVTSLGPIAQSTKKYFDATLFVGKTVSGLDVEAVDATLLRMSILGAEPEEYHAFLAGIGMSDAEAHRIASAISLADAQIVQLARTVNLAVPSSWMSLDFDTLIRSHSYPRQPGISDSSTLVRERASWINSVLRLLCATVAMSRVGPVCQATVSSVDGGVNQIVGCLRAWMRDV</sequence>